<name>MNMA_STAEQ</name>
<sequence length="372" mass="42300">MSNKDIRVVVGMSGGVDSSVTAYLLKEQGYDVIGIFMKNWDDTDENGVCTATEDYNDVIAVCNQIGIPYYAVNFEEQYWDKVFTYFLDEYKKGRTPNPDVMCNKEIKFKAFLEHALKLGADYVATGHYARIRRHDDGHVEMLRGVDNNKDQTYFLNQLSQEQLSKVMFPIGDIEKSEVRRIAEEQNLATAKKKDSTGICFIGERNFKEFLSHYLPAQSGEMLTLNGKKMGQHSGLMYYTIGQRHGLGIGGDGDPWFVVGKNLNDNVLYVEQGFHHDALYSDYLIASDYSFVNPSEIDLEKGFECTAKFRYRQKDTKVYVQRENENSIRVTFAEPVRAITPGQAVVFYNQEVCLGGATIDDVYKNEGQLSYVV</sequence>
<accession>Q5HNS9</accession>
<reference key="1">
    <citation type="journal article" date="2005" name="J. Bacteriol.">
        <title>Insights on evolution of virulence and resistance from the complete genome analysis of an early methicillin-resistant Staphylococcus aureus strain and a biofilm-producing methicillin-resistant Staphylococcus epidermidis strain.</title>
        <authorList>
            <person name="Gill S.R."/>
            <person name="Fouts D.E."/>
            <person name="Archer G.L."/>
            <person name="Mongodin E.F."/>
            <person name="DeBoy R.T."/>
            <person name="Ravel J."/>
            <person name="Paulsen I.T."/>
            <person name="Kolonay J.F."/>
            <person name="Brinkac L.M."/>
            <person name="Beanan M.J."/>
            <person name="Dodson R.J."/>
            <person name="Daugherty S.C."/>
            <person name="Madupu R."/>
            <person name="Angiuoli S.V."/>
            <person name="Durkin A.S."/>
            <person name="Haft D.H."/>
            <person name="Vamathevan J.J."/>
            <person name="Khouri H."/>
            <person name="Utterback T.R."/>
            <person name="Lee C."/>
            <person name="Dimitrov G."/>
            <person name="Jiang L."/>
            <person name="Qin H."/>
            <person name="Weidman J."/>
            <person name="Tran K."/>
            <person name="Kang K.H."/>
            <person name="Hance I.R."/>
            <person name="Nelson K.E."/>
            <person name="Fraser C.M."/>
        </authorList>
    </citation>
    <scope>NUCLEOTIDE SEQUENCE [LARGE SCALE GENOMIC DNA]</scope>
    <source>
        <strain>ATCC 35984 / DSM 28319 / BCRC 17069 / CCUG 31568 / BM 3577 / RP62A</strain>
    </source>
</reference>
<comment type="function">
    <text evidence="1">Catalyzes the 2-thiolation of uridine at the wobble position (U34) of tRNA, leading to the formation of s(2)U34.</text>
</comment>
<comment type="catalytic activity">
    <reaction evidence="1">
        <text>S-sulfanyl-L-cysteinyl-[protein] + uridine(34) in tRNA + AH2 + ATP = 2-thiouridine(34) in tRNA + L-cysteinyl-[protein] + A + AMP + diphosphate + H(+)</text>
        <dbReference type="Rhea" id="RHEA:47032"/>
        <dbReference type="Rhea" id="RHEA-COMP:10131"/>
        <dbReference type="Rhea" id="RHEA-COMP:11726"/>
        <dbReference type="Rhea" id="RHEA-COMP:11727"/>
        <dbReference type="Rhea" id="RHEA-COMP:11728"/>
        <dbReference type="ChEBI" id="CHEBI:13193"/>
        <dbReference type="ChEBI" id="CHEBI:15378"/>
        <dbReference type="ChEBI" id="CHEBI:17499"/>
        <dbReference type="ChEBI" id="CHEBI:29950"/>
        <dbReference type="ChEBI" id="CHEBI:30616"/>
        <dbReference type="ChEBI" id="CHEBI:33019"/>
        <dbReference type="ChEBI" id="CHEBI:61963"/>
        <dbReference type="ChEBI" id="CHEBI:65315"/>
        <dbReference type="ChEBI" id="CHEBI:87170"/>
        <dbReference type="ChEBI" id="CHEBI:456215"/>
        <dbReference type="EC" id="2.8.1.13"/>
    </reaction>
</comment>
<comment type="subcellular location">
    <subcellularLocation>
        <location evidence="1">Cytoplasm</location>
    </subcellularLocation>
</comment>
<comment type="similarity">
    <text evidence="1">Belongs to the MnmA/TRMU family.</text>
</comment>
<gene>
    <name evidence="1" type="primary">mnmA</name>
    <name type="synonym">trmU</name>
    <name type="ordered locus">SERP1185</name>
</gene>
<protein>
    <recommendedName>
        <fullName evidence="1">tRNA-specific 2-thiouridylase MnmA</fullName>
        <ecNumber evidence="1">2.8.1.13</ecNumber>
    </recommendedName>
</protein>
<evidence type="ECO:0000255" key="1">
    <source>
        <dbReference type="HAMAP-Rule" id="MF_00144"/>
    </source>
</evidence>
<proteinExistence type="inferred from homology"/>
<feature type="chain" id="PRO_0000121680" description="tRNA-specific 2-thiouridylase MnmA">
    <location>
        <begin position="1"/>
        <end position="372"/>
    </location>
</feature>
<feature type="region of interest" description="Interaction with target base in tRNA" evidence="1">
    <location>
        <begin position="97"/>
        <end position="99"/>
    </location>
</feature>
<feature type="region of interest" description="Interaction with tRNA" evidence="1">
    <location>
        <begin position="149"/>
        <end position="151"/>
    </location>
</feature>
<feature type="region of interest" description="Interaction with tRNA" evidence="1">
    <location>
        <begin position="309"/>
        <end position="310"/>
    </location>
</feature>
<feature type="active site" description="Nucleophile" evidence="1">
    <location>
        <position position="102"/>
    </location>
</feature>
<feature type="active site" description="Cysteine persulfide intermediate" evidence="1">
    <location>
        <position position="199"/>
    </location>
</feature>
<feature type="binding site" evidence="1">
    <location>
        <begin position="11"/>
        <end position="18"/>
    </location>
    <ligand>
        <name>ATP</name>
        <dbReference type="ChEBI" id="CHEBI:30616"/>
    </ligand>
</feature>
<feature type="binding site" evidence="1">
    <location>
        <position position="37"/>
    </location>
    <ligand>
        <name>ATP</name>
        <dbReference type="ChEBI" id="CHEBI:30616"/>
    </ligand>
</feature>
<feature type="binding site" evidence="1">
    <location>
        <position position="126"/>
    </location>
    <ligand>
        <name>ATP</name>
        <dbReference type="ChEBI" id="CHEBI:30616"/>
    </ligand>
</feature>
<feature type="site" description="Interaction with tRNA" evidence="1">
    <location>
        <position position="127"/>
    </location>
</feature>
<feature type="site" description="Interaction with tRNA" evidence="1">
    <location>
        <position position="342"/>
    </location>
</feature>
<feature type="disulfide bond" description="Alternate" evidence="1">
    <location>
        <begin position="102"/>
        <end position="199"/>
    </location>
</feature>
<dbReference type="EC" id="2.8.1.13" evidence="1"/>
<dbReference type="EMBL" id="CP000029">
    <property type="protein sequence ID" value="AAW54558.1"/>
    <property type="molecule type" value="Genomic_DNA"/>
</dbReference>
<dbReference type="RefSeq" id="WP_001830892.1">
    <property type="nucleotide sequence ID" value="NC_002976.3"/>
</dbReference>
<dbReference type="SMR" id="Q5HNS9"/>
<dbReference type="STRING" id="176279.SERP1185"/>
<dbReference type="GeneID" id="50018580"/>
<dbReference type="KEGG" id="ser:SERP1185"/>
<dbReference type="eggNOG" id="COG0482">
    <property type="taxonomic scope" value="Bacteria"/>
</dbReference>
<dbReference type="HOGENOM" id="CLU_035188_1_0_9"/>
<dbReference type="Proteomes" id="UP000000531">
    <property type="component" value="Chromosome"/>
</dbReference>
<dbReference type="GO" id="GO:0005737">
    <property type="term" value="C:cytoplasm"/>
    <property type="evidence" value="ECO:0007669"/>
    <property type="project" value="UniProtKB-SubCell"/>
</dbReference>
<dbReference type="GO" id="GO:0005524">
    <property type="term" value="F:ATP binding"/>
    <property type="evidence" value="ECO:0007669"/>
    <property type="project" value="UniProtKB-KW"/>
</dbReference>
<dbReference type="GO" id="GO:0000049">
    <property type="term" value="F:tRNA binding"/>
    <property type="evidence" value="ECO:0007669"/>
    <property type="project" value="UniProtKB-KW"/>
</dbReference>
<dbReference type="GO" id="GO:0103016">
    <property type="term" value="F:tRNA-uridine 2-sulfurtransferase activity"/>
    <property type="evidence" value="ECO:0007669"/>
    <property type="project" value="UniProtKB-EC"/>
</dbReference>
<dbReference type="GO" id="GO:0002143">
    <property type="term" value="P:tRNA wobble position uridine thiolation"/>
    <property type="evidence" value="ECO:0007669"/>
    <property type="project" value="TreeGrafter"/>
</dbReference>
<dbReference type="CDD" id="cd01998">
    <property type="entry name" value="MnmA_TRMU-like"/>
    <property type="match status" value="1"/>
</dbReference>
<dbReference type="FunFam" id="2.30.30.280:FF:000001">
    <property type="entry name" value="tRNA-specific 2-thiouridylase MnmA"/>
    <property type="match status" value="1"/>
</dbReference>
<dbReference type="FunFam" id="2.40.30.10:FF:000023">
    <property type="entry name" value="tRNA-specific 2-thiouridylase MnmA"/>
    <property type="match status" value="1"/>
</dbReference>
<dbReference type="FunFam" id="3.40.50.620:FF:000004">
    <property type="entry name" value="tRNA-specific 2-thiouridylase MnmA"/>
    <property type="match status" value="1"/>
</dbReference>
<dbReference type="Gene3D" id="2.30.30.280">
    <property type="entry name" value="Adenine nucleotide alpha hydrolases-like domains"/>
    <property type="match status" value="1"/>
</dbReference>
<dbReference type="Gene3D" id="3.40.50.620">
    <property type="entry name" value="HUPs"/>
    <property type="match status" value="1"/>
</dbReference>
<dbReference type="Gene3D" id="2.40.30.10">
    <property type="entry name" value="Translation factors"/>
    <property type="match status" value="1"/>
</dbReference>
<dbReference type="HAMAP" id="MF_00144">
    <property type="entry name" value="tRNA_thiouridyl_MnmA"/>
    <property type="match status" value="1"/>
</dbReference>
<dbReference type="InterPro" id="IPR004506">
    <property type="entry name" value="MnmA-like"/>
</dbReference>
<dbReference type="InterPro" id="IPR046885">
    <property type="entry name" value="MnmA-like_C"/>
</dbReference>
<dbReference type="InterPro" id="IPR046884">
    <property type="entry name" value="MnmA-like_central"/>
</dbReference>
<dbReference type="InterPro" id="IPR023382">
    <property type="entry name" value="MnmA-like_central_sf"/>
</dbReference>
<dbReference type="InterPro" id="IPR014729">
    <property type="entry name" value="Rossmann-like_a/b/a_fold"/>
</dbReference>
<dbReference type="NCBIfam" id="NF001138">
    <property type="entry name" value="PRK00143.1"/>
    <property type="match status" value="1"/>
</dbReference>
<dbReference type="NCBIfam" id="TIGR00420">
    <property type="entry name" value="trmU"/>
    <property type="match status" value="1"/>
</dbReference>
<dbReference type="PANTHER" id="PTHR11933:SF5">
    <property type="entry name" value="MITOCHONDRIAL TRNA-SPECIFIC 2-THIOURIDYLASE 1"/>
    <property type="match status" value="1"/>
</dbReference>
<dbReference type="PANTHER" id="PTHR11933">
    <property type="entry name" value="TRNA 5-METHYLAMINOMETHYL-2-THIOURIDYLATE -METHYLTRANSFERASE"/>
    <property type="match status" value="1"/>
</dbReference>
<dbReference type="Pfam" id="PF03054">
    <property type="entry name" value="tRNA_Me_trans"/>
    <property type="match status" value="1"/>
</dbReference>
<dbReference type="Pfam" id="PF20258">
    <property type="entry name" value="tRNA_Me_trans_C"/>
    <property type="match status" value="1"/>
</dbReference>
<dbReference type="Pfam" id="PF20259">
    <property type="entry name" value="tRNA_Me_trans_M"/>
    <property type="match status" value="1"/>
</dbReference>
<dbReference type="SUPFAM" id="SSF52402">
    <property type="entry name" value="Adenine nucleotide alpha hydrolases-like"/>
    <property type="match status" value="1"/>
</dbReference>
<keyword id="KW-0067">ATP-binding</keyword>
<keyword id="KW-0963">Cytoplasm</keyword>
<keyword id="KW-1015">Disulfide bond</keyword>
<keyword id="KW-0547">Nucleotide-binding</keyword>
<keyword id="KW-1185">Reference proteome</keyword>
<keyword id="KW-0694">RNA-binding</keyword>
<keyword id="KW-0808">Transferase</keyword>
<keyword id="KW-0819">tRNA processing</keyword>
<keyword id="KW-0820">tRNA-binding</keyword>
<organism>
    <name type="scientific">Staphylococcus epidermidis (strain ATCC 35984 / DSM 28319 / BCRC 17069 / CCUG 31568 / BM 3577 / RP62A)</name>
    <dbReference type="NCBI Taxonomy" id="176279"/>
    <lineage>
        <taxon>Bacteria</taxon>
        <taxon>Bacillati</taxon>
        <taxon>Bacillota</taxon>
        <taxon>Bacilli</taxon>
        <taxon>Bacillales</taxon>
        <taxon>Staphylococcaceae</taxon>
        <taxon>Staphylococcus</taxon>
    </lineage>
</organism>